<organism>
    <name type="scientific">Drosophila melanogaster</name>
    <name type="common">Fruit fly</name>
    <dbReference type="NCBI Taxonomy" id="7227"/>
    <lineage>
        <taxon>Eukaryota</taxon>
        <taxon>Metazoa</taxon>
        <taxon>Ecdysozoa</taxon>
        <taxon>Arthropoda</taxon>
        <taxon>Hexapoda</taxon>
        <taxon>Insecta</taxon>
        <taxon>Pterygota</taxon>
        <taxon>Neoptera</taxon>
        <taxon>Endopterygota</taxon>
        <taxon>Diptera</taxon>
        <taxon>Brachycera</taxon>
        <taxon>Muscomorpha</taxon>
        <taxon>Ephydroidea</taxon>
        <taxon>Drosophilidae</taxon>
        <taxon>Drosophila</taxon>
        <taxon>Sophophora</taxon>
    </lineage>
</organism>
<accession>Q9VEW2</accession>
<accession>B8A432</accession>
<feature type="chain" id="PRO_0000050714" description="Putative SERF-like protein">
    <location>
        <begin position="1"/>
        <end position="60"/>
    </location>
</feature>
<feature type="region of interest" description="Disordered" evidence="1">
    <location>
        <begin position="1"/>
        <end position="60"/>
    </location>
</feature>
<feature type="compositionally biased region" description="Basic and acidic residues" evidence="1">
    <location>
        <begin position="1"/>
        <end position="53"/>
    </location>
</feature>
<name>SERFL_DROME</name>
<sequence>MTRGNQRDLARQKNQKKQADLTKGKRTDNLTVEQRKARDAELMREKQKKKEEAAAAGTSK</sequence>
<comment type="similarity">
    <text evidence="2">Belongs to the SERF family.</text>
</comment>
<keyword id="KW-1185">Reference proteome</keyword>
<reference key="1">
    <citation type="journal article" date="2000" name="Science">
        <title>The genome sequence of Drosophila melanogaster.</title>
        <authorList>
            <person name="Adams M.D."/>
            <person name="Celniker S.E."/>
            <person name="Holt R.A."/>
            <person name="Evans C.A."/>
            <person name="Gocayne J.D."/>
            <person name="Amanatides P.G."/>
            <person name="Scherer S.E."/>
            <person name="Li P.W."/>
            <person name="Hoskins R.A."/>
            <person name="Galle R.F."/>
            <person name="George R.A."/>
            <person name="Lewis S.E."/>
            <person name="Richards S."/>
            <person name="Ashburner M."/>
            <person name="Henderson S.N."/>
            <person name="Sutton G.G."/>
            <person name="Wortman J.R."/>
            <person name="Yandell M.D."/>
            <person name="Zhang Q."/>
            <person name="Chen L.X."/>
            <person name="Brandon R.C."/>
            <person name="Rogers Y.-H.C."/>
            <person name="Blazej R.G."/>
            <person name="Champe M."/>
            <person name="Pfeiffer B.D."/>
            <person name="Wan K.H."/>
            <person name="Doyle C."/>
            <person name="Baxter E.G."/>
            <person name="Helt G."/>
            <person name="Nelson C.R."/>
            <person name="Miklos G.L.G."/>
            <person name="Abril J.F."/>
            <person name="Agbayani A."/>
            <person name="An H.-J."/>
            <person name="Andrews-Pfannkoch C."/>
            <person name="Baldwin D."/>
            <person name="Ballew R.M."/>
            <person name="Basu A."/>
            <person name="Baxendale J."/>
            <person name="Bayraktaroglu L."/>
            <person name="Beasley E.M."/>
            <person name="Beeson K.Y."/>
            <person name="Benos P.V."/>
            <person name="Berman B.P."/>
            <person name="Bhandari D."/>
            <person name="Bolshakov S."/>
            <person name="Borkova D."/>
            <person name="Botchan M.R."/>
            <person name="Bouck J."/>
            <person name="Brokstein P."/>
            <person name="Brottier P."/>
            <person name="Burtis K.C."/>
            <person name="Busam D.A."/>
            <person name="Butler H."/>
            <person name="Cadieu E."/>
            <person name="Center A."/>
            <person name="Chandra I."/>
            <person name="Cherry J.M."/>
            <person name="Cawley S."/>
            <person name="Dahlke C."/>
            <person name="Davenport L.B."/>
            <person name="Davies P."/>
            <person name="de Pablos B."/>
            <person name="Delcher A."/>
            <person name="Deng Z."/>
            <person name="Mays A.D."/>
            <person name="Dew I."/>
            <person name="Dietz S.M."/>
            <person name="Dodson K."/>
            <person name="Doup L.E."/>
            <person name="Downes M."/>
            <person name="Dugan-Rocha S."/>
            <person name="Dunkov B.C."/>
            <person name="Dunn P."/>
            <person name="Durbin K.J."/>
            <person name="Evangelista C.C."/>
            <person name="Ferraz C."/>
            <person name="Ferriera S."/>
            <person name="Fleischmann W."/>
            <person name="Fosler C."/>
            <person name="Gabrielian A.E."/>
            <person name="Garg N.S."/>
            <person name="Gelbart W.M."/>
            <person name="Glasser K."/>
            <person name="Glodek A."/>
            <person name="Gong F."/>
            <person name="Gorrell J.H."/>
            <person name="Gu Z."/>
            <person name="Guan P."/>
            <person name="Harris M."/>
            <person name="Harris N.L."/>
            <person name="Harvey D.A."/>
            <person name="Heiman T.J."/>
            <person name="Hernandez J.R."/>
            <person name="Houck J."/>
            <person name="Hostin D."/>
            <person name="Houston K.A."/>
            <person name="Howland T.J."/>
            <person name="Wei M.-H."/>
            <person name="Ibegwam C."/>
            <person name="Jalali M."/>
            <person name="Kalush F."/>
            <person name="Karpen G.H."/>
            <person name="Ke Z."/>
            <person name="Kennison J.A."/>
            <person name="Ketchum K.A."/>
            <person name="Kimmel B.E."/>
            <person name="Kodira C.D."/>
            <person name="Kraft C.L."/>
            <person name="Kravitz S."/>
            <person name="Kulp D."/>
            <person name="Lai Z."/>
            <person name="Lasko P."/>
            <person name="Lei Y."/>
            <person name="Levitsky A.A."/>
            <person name="Li J.H."/>
            <person name="Li Z."/>
            <person name="Liang Y."/>
            <person name="Lin X."/>
            <person name="Liu X."/>
            <person name="Mattei B."/>
            <person name="McIntosh T.C."/>
            <person name="McLeod M.P."/>
            <person name="McPherson D."/>
            <person name="Merkulov G."/>
            <person name="Milshina N.V."/>
            <person name="Mobarry C."/>
            <person name="Morris J."/>
            <person name="Moshrefi A."/>
            <person name="Mount S.M."/>
            <person name="Moy M."/>
            <person name="Murphy B."/>
            <person name="Murphy L."/>
            <person name="Muzny D.M."/>
            <person name="Nelson D.L."/>
            <person name="Nelson D.R."/>
            <person name="Nelson K.A."/>
            <person name="Nixon K."/>
            <person name="Nusskern D.R."/>
            <person name="Pacleb J.M."/>
            <person name="Palazzolo M."/>
            <person name="Pittman G.S."/>
            <person name="Pan S."/>
            <person name="Pollard J."/>
            <person name="Puri V."/>
            <person name="Reese M.G."/>
            <person name="Reinert K."/>
            <person name="Remington K."/>
            <person name="Saunders R.D.C."/>
            <person name="Scheeler F."/>
            <person name="Shen H."/>
            <person name="Shue B.C."/>
            <person name="Siden-Kiamos I."/>
            <person name="Simpson M."/>
            <person name="Skupski M.P."/>
            <person name="Smith T.J."/>
            <person name="Spier E."/>
            <person name="Spradling A.C."/>
            <person name="Stapleton M."/>
            <person name="Strong R."/>
            <person name="Sun E."/>
            <person name="Svirskas R."/>
            <person name="Tector C."/>
            <person name="Turner R."/>
            <person name="Venter E."/>
            <person name="Wang A.H."/>
            <person name="Wang X."/>
            <person name="Wang Z.-Y."/>
            <person name="Wassarman D.A."/>
            <person name="Weinstock G.M."/>
            <person name="Weissenbach J."/>
            <person name="Williams S.M."/>
            <person name="Woodage T."/>
            <person name="Worley K.C."/>
            <person name="Wu D."/>
            <person name="Yang S."/>
            <person name="Yao Q.A."/>
            <person name="Ye J."/>
            <person name="Yeh R.-F."/>
            <person name="Zaveri J.S."/>
            <person name="Zhan M."/>
            <person name="Zhang G."/>
            <person name="Zhao Q."/>
            <person name="Zheng L."/>
            <person name="Zheng X.H."/>
            <person name="Zhong F.N."/>
            <person name="Zhong W."/>
            <person name="Zhou X."/>
            <person name="Zhu S.C."/>
            <person name="Zhu X."/>
            <person name="Smith H.O."/>
            <person name="Gibbs R.A."/>
            <person name="Myers E.W."/>
            <person name="Rubin G.M."/>
            <person name="Venter J.C."/>
        </authorList>
    </citation>
    <scope>NUCLEOTIDE SEQUENCE [LARGE SCALE GENOMIC DNA]</scope>
    <source>
        <strain>Berkeley</strain>
    </source>
</reference>
<reference key="2">
    <citation type="journal article" date="2002" name="Genome Biol.">
        <title>Annotation of the Drosophila melanogaster euchromatic genome: a systematic review.</title>
        <authorList>
            <person name="Misra S."/>
            <person name="Crosby M.A."/>
            <person name="Mungall C.J."/>
            <person name="Matthews B.B."/>
            <person name="Campbell K.S."/>
            <person name="Hradecky P."/>
            <person name="Huang Y."/>
            <person name="Kaminker J.S."/>
            <person name="Millburn G.H."/>
            <person name="Prochnik S.E."/>
            <person name="Smith C.D."/>
            <person name="Tupy J.L."/>
            <person name="Whitfield E.J."/>
            <person name="Bayraktaroglu L."/>
            <person name="Berman B.P."/>
            <person name="Bettencourt B.R."/>
            <person name="Celniker S.E."/>
            <person name="de Grey A.D.N.J."/>
            <person name="Drysdale R.A."/>
            <person name="Harris N.L."/>
            <person name="Richter J."/>
            <person name="Russo S."/>
            <person name="Schroeder A.J."/>
            <person name="Shu S.Q."/>
            <person name="Stapleton M."/>
            <person name="Yamada C."/>
            <person name="Ashburner M."/>
            <person name="Gelbart W.M."/>
            <person name="Rubin G.M."/>
            <person name="Lewis S.E."/>
        </authorList>
    </citation>
    <scope>GENOME REANNOTATION</scope>
    <source>
        <strain>Berkeley</strain>
    </source>
</reference>
<reference key="3">
    <citation type="submission" date="2009-01" db="EMBL/GenBank/DDBJ databases">
        <authorList>
            <person name="Carlson J.W."/>
            <person name="Booth B."/>
            <person name="Frise E."/>
            <person name="Park S."/>
            <person name="Wan K.H."/>
            <person name="Yu C."/>
            <person name="Celniker S.E."/>
        </authorList>
    </citation>
    <scope>NUCLEOTIDE SEQUENCE [LARGE SCALE MRNA]</scope>
    <source>
        <strain>Berkeley</strain>
        <tissue>Embryo</tissue>
    </source>
</reference>
<dbReference type="EMBL" id="AE014297">
    <property type="protein sequence ID" value="AAF55305.1"/>
    <property type="molecule type" value="Genomic_DNA"/>
</dbReference>
<dbReference type="EMBL" id="BT056324">
    <property type="protein sequence ID" value="ACL83642.1"/>
    <property type="molecule type" value="mRNA"/>
</dbReference>
<dbReference type="RefSeq" id="NP_001262630.1">
    <property type="nucleotide sequence ID" value="NM_001275701.1"/>
</dbReference>
<dbReference type="RefSeq" id="NP_001287365.1">
    <property type="nucleotide sequence ID" value="NM_001300436.1"/>
</dbReference>
<dbReference type="RefSeq" id="NP_001303489.1">
    <property type="nucleotide sequence ID" value="NM_001316560.1"/>
</dbReference>
<dbReference type="RefSeq" id="NP_732133.1">
    <property type="nucleotide sequence ID" value="NM_169715.2"/>
</dbReference>
<dbReference type="DIP" id="DIP-22180N"/>
<dbReference type="FunCoup" id="Q9VEW2">
    <property type="interactions" value="565"/>
</dbReference>
<dbReference type="IntAct" id="Q9VEW2">
    <property type="interactions" value="36"/>
</dbReference>
<dbReference type="STRING" id="7227.FBpp0311403"/>
<dbReference type="PaxDb" id="7227-FBpp0304486"/>
<dbReference type="DNASU" id="8674030"/>
<dbReference type="EnsemblMetazoa" id="FBtr0083323">
    <property type="protein sequence ID" value="FBpp0082773"/>
    <property type="gene ID" value="FBgn0038421"/>
</dbReference>
<dbReference type="EnsemblMetazoa" id="FBtr0332177">
    <property type="protein sequence ID" value="FBpp0304486"/>
    <property type="gene ID" value="FBgn0038421"/>
</dbReference>
<dbReference type="EnsemblMetazoa" id="FBtr0345208">
    <property type="protein sequence ID" value="FBpp0311403"/>
    <property type="gene ID" value="FBgn0038421"/>
</dbReference>
<dbReference type="EnsemblMetazoa" id="FBtr0392900">
    <property type="protein sequence ID" value="FBpp0352242"/>
    <property type="gene ID" value="FBgn0038421"/>
</dbReference>
<dbReference type="GeneID" id="8674030"/>
<dbReference type="KEGG" id="dme:Dmel_CG17931"/>
<dbReference type="UCSC" id="CG17931-RA">
    <property type="organism name" value="d. melanogaster"/>
</dbReference>
<dbReference type="AGR" id="FB:FBgn0038421"/>
<dbReference type="FlyBase" id="FBgn0038421">
    <property type="gene designation" value="CG17931"/>
</dbReference>
<dbReference type="VEuPathDB" id="VectorBase:FBgn0038421"/>
<dbReference type="eggNOG" id="KOG4488">
    <property type="taxonomic scope" value="Eukaryota"/>
</dbReference>
<dbReference type="HOGENOM" id="CLU_165034_1_2_1"/>
<dbReference type="InParanoid" id="Q9VEW2"/>
<dbReference type="OMA" id="NRDADIM"/>
<dbReference type="OrthoDB" id="18018at2759"/>
<dbReference type="PhylomeDB" id="Q9VEW2"/>
<dbReference type="BioGRID-ORCS" id="8674030">
    <property type="hits" value="0 hits in 3 CRISPR screens"/>
</dbReference>
<dbReference type="ChiTaRS" id="CG17931">
    <property type="organism name" value="fly"/>
</dbReference>
<dbReference type="GenomeRNAi" id="8674030"/>
<dbReference type="PRO" id="PR:Q9VEW2"/>
<dbReference type="Proteomes" id="UP000000803">
    <property type="component" value="Chromosome 3R"/>
</dbReference>
<dbReference type="Bgee" id="FBgn0038421">
    <property type="expression patterns" value="Expressed in ovary and 177 other cell types or tissues"/>
</dbReference>
<dbReference type="ExpressionAtlas" id="Q9VEW2">
    <property type="expression patterns" value="baseline"/>
</dbReference>
<dbReference type="GO" id="GO:0005829">
    <property type="term" value="C:cytosol"/>
    <property type="evidence" value="ECO:0007005"/>
    <property type="project" value="FlyBase"/>
</dbReference>
<dbReference type="InterPro" id="IPR007513">
    <property type="entry name" value="SERF-like_N"/>
</dbReference>
<dbReference type="InterPro" id="IPR040211">
    <property type="entry name" value="SERF1/2-like"/>
</dbReference>
<dbReference type="PANTHER" id="PTHR13596:SF0">
    <property type="entry name" value="SI:CH211-39K3.2-RELATED"/>
    <property type="match status" value="1"/>
</dbReference>
<dbReference type="PANTHER" id="PTHR13596">
    <property type="entry name" value="SMALL EDRK-RICH FACTOR 1"/>
    <property type="match status" value="1"/>
</dbReference>
<dbReference type="Pfam" id="PF04419">
    <property type="entry name" value="SERF-like_N"/>
    <property type="match status" value="1"/>
</dbReference>
<gene>
    <name type="ORF">CG17931</name>
</gene>
<evidence type="ECO:0000256" key="1">
    <source>
        <dbReference type="SAM" id="MobiDB-lite"/>
    </source>
</evidence>
<evidence type="ECO:0000305" key="2"/>
<protein>
    <recommendedName>
        <fullName>Putative SERF-like protein</fullName>
    </recommendedName>
</protein>
<proteinExistence type="inferred from homology"/>